<reference key="1">
    <citation type="journal article" date="2001" name="Proc. Natl. Acad. Sci. U.S.A.">
        <title>Genome sequence of an industrial microorganism Streptomyces avermitilis: deducing the ability of producing secondary metabolites.</title>
        <authorList>
            <person name="Omura S."/>
            <person name="Ikeda H."/>
            <person name="Ishikawa J."/>
            <person name="Hanamoto A."/>
            <person name="Takahashi C."/>
            <person name="Shinose M."/>
            <person name="Takahashi Y."/>
            <person name="Horikawa H."/>
            <person name="Nakazawa H."/>
            <person name="Osonoe T."/>
            <person name="Kikuchi H."/>
            <person name="Shiba T."/>
            <person name="Sakaki Y."/>
            <person name="Hattori M."/>
        </authorList>
    </citation>
    <scope>NUCLEOTIDE SEQUENCE [LARGE SCALE GENOMIC DNA]</scope>
    <source>
        <strain>ATCC 31267 / DSM 46492 / JCM 5070 / NBRC 14893 / NCIMB 12804 / NRRL 8165 / MA-4680</strain>
    </source>
</reference>
<reference key="2">
    <citation type="journal article" date="2003" name="Nat. Biotechnol.">
        <title>Complete genome sequence and comparative analysis of the industrial microorganism Streptomyces avermitilis.</title>
        <authorList>
            <person name="Ikeda H."/>
            <person name="Ishikawa J."/>
            <person name="Hanamoto A."/>
            <person name="Shinose M."/>
            <person name="Kikuchi H."/>
            <person name="Shiba T."/>
            <person name="Sakaki Y."/>
            <person name="Hattori M."/>
            <person name="Omura S."/>
        </authorList>
    </citation>
    <scope>NUCLEOTIDE SEQUENCE [LARGE SCALE GENOMIC DNA]</scope>
    <source>
        <strain>ATCC 31267 / DSM 46492 / JCM 5070 / NBRC 14893 / NCIMB 12804 / NRRL 8165 / MA-4680</strain>
    </source>
</reference>
<dbReference type="EMBL" id="BA000030">
    <property type="protein sequence ID" value="BAC74390.1"/>
    <property type="molecule type" value="Genomic_DNA"/>
</dbReference>
<dbReference type="RefSeq" id="WP_010988079.1">
    <property type="nucleotide sequence ID" value="NZ_JZJK01000082.1"/>
</dbReference>
<dbReference type="SMR" id="Q828J0"/>
<dbReference type="GeneID" id="41543750"/>
<dbReference type="KEGG" id="sma:SAVERM_6679"/>
<dbReference type="eggNOG" id="ENOG50333JS">
    <property type="taxonomic scope" value="Bacteria"/>
</dbReference>
<dbReference type="HOGENOM" id="CLU_183816_2_0_11"/>
<dbReference type="UniPathway" id="UPA00997"/>
<dbReference type="Proteomes" id="UP000000428">
    <property type="component" value="Chromosome"/>
</dbReference>
<dbReference type="GO" id="GO:0070628">
    <property type="term" value="F:proteasome binding"/>
    <property type="evidence" value="ECO:0007669"/>
    <property type="project" value="UniProtKB-UniRule"/>
</dbReference>
<dbReference type="GO" id="GO:0031386">
    <property type="term" value="F:protein tag activity"/>
    <property type="evidence" value="ECO:0007669"/>
    <property type="project" value="UniProtKB-UniRule"/>
</dbReference>
<dbReference type="GO" id="GO:0019941">
    <property type="term" value="P:modification-dependent protein catabolic process"/>
    <property type="evidence" value="ECO:0007669"/>
    <property type="project" value="UniProtKB-UniRule"/>
</dbReference>
<dbReference type="GO" id="GO:0010498">
    <property type="term" value="P:proteasomal protein catabolic process"/>
    <property type="evidence" value="ECO:0007669"/>
    <property type="project" value="UniProtKB-UniRule"/>
</dbReference>
<dbReference type="GO" id="GO:0070490">
    <property type="term" value="P:protein pupylation"/>
    <property type="evidence" value="ECO:0007669"/>
    <property type="project" value="UniProtKB-UniRule"/>
</dbReference>
<dbReference type="HAMAP" id="MF_02106">
    <property type="entry name" value="Pup"/>
    <property type="match status" value="1"/>
</dbReference>
<dbReference type="InterPro" id="IPR008515">
    <property type="entry name" value="Ubiquitin-like_Pup"/>
</dbReference>
<dbReference type="NCBIfam" id="TIGR03687">
    <property type="entry name" value="pupylate_cterm"/>
    <property type="match status" value="1"/>
</dbReference>
<dbReference type="Pfam" id="PF05639">
    <property type="entry name" value="Pup"/>
    <property type="match status" value="1"/>
</dbReference>
<gene>
    <name evidence="1" type="primary">pup</name>
    <name type="ordered locus">SAV_6679</name>
</gene>
<name>PUP_STRAW</name>
<comment type="function">
    <text evidence="1">Protein modifier that is covalently attached to lysine residues of substrate proteins, thereby targeting them for proteasomal degradation. The tagging system is termed pupylation.</text>
</comment>
<comment type="pathway">
    <text evidence="1">Protein degradation; proteasomal Pup-dependent pathway.</text>
</comment>
<comment type="subunit">
    <text evidence="1">Strongly interacts with the proteasome-associated ATPase ARC through a hydrophobic interface; the interacting region of Pup lies in its C-terminal half. There is one Pup binding site per ARC hexamer ring.</text>
</comment>
<comment type="domain">
    <text evidence="1">The N-terminal unstructured half of Pup provides a signal required to initiate unfolding and degradation by the proteasome but is not needed for pupylation, while the C-terminal helical half of Pup interacts with ARC to target proteins to the proteasome.</text>
</comment>
<comment type="similarity">
    <text evidence="1">Belongs to the prokaryotic ubiquitin-like protein family.</text>
</comment>
<evidence type="ECO:0000255" key="1">
    <source>
        <dbReference type="HAMAP-Rule" id="MF_02106"/>
    </source>
</evidence>
<evidence type="ECO:0000256" key="2">
    <source>
        <dbReference type="SAM" id="MobiDB-lite"/>
    </source>
</evidence>
<keyword id="KW-0175">Coiled coil</keyword>
<keyword id="KW-1017">Isopeptide bond</keyword>
<keyword id="KW-1185">Reference proteome</keyword>
<keyword id="KW-0833">Ubl conjugation pathway</keyword>
<sequence length="72" mass="8003">MATKDTGGGQQKATRNTEEVEEQAQDAQASEDLKERQEKLSDDVDSVLDEIDDVLEENAEDFVRSFVQKGGE</sequence>
<organism>
    <name type="scientific">Streptomyces avermitilis (strain ATCC 31267 / DSM 46492 / JCM 5070 / NBRC 14893 / NCIMB 12804 / NRRL 8165 / MA-4680)</name>
    <dbReference type="NCBI Taxonomy" id="227882"/>
    <lineage>
        <taxon>Bacteria</taxon>
        <taxon>Bacillati</taxon>
        <taxon>Actinomycetota</taxon>
        <taxon>Actinomycetes</taxon>
        <taxon>Kitasatosporales</taxon>
        <taxon>Streptomycetaceae</taxon>
        <taxon>Streptomyces</taxon>
    </lineage>
</organism>
<accession>Q828J0</accession>
<feature type="chain" id="PRO_0000390613" description="Prokaryotic ubiquitin-like protein Pup">
    <location>
        <begin position="1"/>
        <end position="72"/>
    </location>
</feature>
<feature type="region of interest" description="Disordered" evidence="2">
    <location>
        <begin position="1"/>
        <end position="45"/>
    </location>
</feature>
<feature type="region of interest" description="ARC ATPase binding" evidence="1">
    <location>
        <begin position="28"/>
        <end position="66"/>
    </location>
</feature>
<feature type="coiled-coil region" evidence="1">
    <location>
        <begin position="9"/>
        <end position="60"/>
    </location>
</feature>
<feature type="compositionally biased region" description="Gly residues" evidence="2">
    <location>
        <begin position="1"/>
        <end position="10"/>
    </location>
</feature>
<feature type="compositionally biased region" description="Basic and acidic residues" evidence="2">
    <location>
        <begin position="31"/>
        <end position="42"/>
    </location>
</feature>
<feature type="cross-link" description="Isoglutamyl lysine isopeptide (Glu-Lys) (interchain with K-? in acceptor proteins)" evidence="1">
    <location>
        <position position="72"/>
    </location>
</feature>
<protein>
    <recommendedName>
        <fullName evidence="1">Prokaryotic ubiquitin-like protein Pup</fullName>
    </recommendedName>
    <alternativeName>
        <fullName evidence="1">Bacterial ubiquitin-like modifier</fullName>
    </alternativeName>
</protein>
<proteinExistence type="inferred from homology"/>